<name>TRPB_SHEDO</name>
<reference key="1">
    <citation type="submission" date="2006-03" db="EMBL/GenBank/DDBJ databases">
        <title>Complete sequence of Shewanella denitrificans OS217.</title>
        <authorList>
            <consortium name="US DOE Joint Genome Institute"/>
            <person name="Copeland A."/>
            <person name="Lucas S."/>
            <person name="Lapidus A."/>
            <person name="Barry K."/>
            <person name="Detter J.C."/>
            <person name="Glavina del Rio T."/>
            <person name="Hammon N."/>
            <person name="Israni S."/>
            <person name="Dalin E."/>
            <person name="Tice H."/>
            <person name="Pitluck S."/>
            <person name="Brettin T."/>
            <person name="Bruce D."/>
            <person name="Han C."/>
            <person name="Tapia R."/>
            <person name="Gilna P."/>
            <person name="Kiss H."/>
            <person name="Schmutz J."/>
            <person name="Larimer F."/>
            <person name="Land M."/>
            <person name="Hauser L."/>
            <person name="Kyrpides N."/>
            <person name="Lykidis A."/>
            <person name="Richardson P."/>
        </authorList>
    </citation>
    <scope>NUCLEOTIDE SEQUENCE [LARGE SCALE GENOMIC DNA]</scope>
    <source>
        <strain>OS217 / ATCC BAA-1090 / DSM 15013</strain>
    </source>
</reference>
<feature type="chain" id="PRO_1000018388" description="Tryptophan synthase beta chain">
    <location>
        <begin position="1"/>
        <end position="401"/>
    </location>
</feature>
<feature type="modified residue" description="N6-(pyridoxal phosphate)lysine" evidence="1">
    <location>
        <position position="88"/>
    </location>
</feature>
<proteinExistence type="inferred from homology"/>
<evidence type="ECO:0000255" key="1">
    <source>
        <dbReference type="HAMAP-Rule" id="MF_00133"/>
    </source>
</evidence>
<accession>Q12LE2</accession>
<comment type="function">
    <text evidence="1">The beta subunit is responsible for the synthesis of L-tryptophan from indole and L-serine.</text>
</comment>
<comment type="catalytic activity">
    <reaction evidence="1">
        <text>(1S,2R)-1-C-(indol-3-yl)glycerol 3-phosphate + L-serine = D-glyceraldehyde 3-phosphate + L-tryptophan + H2O</text>
        <dbReference type="Rhea" id="RHEA:10532"/>
        <dbReference type="ChEBI" id="CHEBI:15377"/>
        <dbReference type="ChEBI" id="CHEBI:33384"/>
        <dbReference type="ChEBI" id="CHEBI:57912"/>
        <dbReference type="ChEBI" id="CHEBI:58866"/>
        <dbReference type="ChEBI" id="CHEBI:59776"/>
        <dbReference type="EC" id="4.2.1.20"/>
    </reaction>
</comment>
<comment type="cofactor">
    <cofactor evidence="1">
        <name>pyridoxal 5'-phosphate</name>
        <dbReference type="ChEBI" id="CHEBI:597326"/>
    </cofactor>
</comment>
<comment type="pathway">
    <text evidence="1">Amino-acid biosynthesis; L-tryptophan biosynthesis; L-tryptophan from chorismate: step 5/5.</text>
</comment>
<comment type="subunit">
    <text evidence="1">Tetramer of two alpha and two beta chains.</text>
</comment>
<comment type="similarity">
    <text evidence="1">Belongs to the TrpB family.</text>
</comment>
<dbReference type="EC" id="4.2.1.20" evidence="1"/>
<dbReference type="EMBL" id="CP000302">
    <property type="protein sequence ID" value="ABE55734.1"/>
    <property type="molecule type" value="Genomic_DNA"/>
</dbReference>
<dbReference type="RefSeq" id="WP_011496885.1">
    <property type="nucleotide sequence ID" value="NC_007954.1"/>
</dbReference>
<dbReference type="SMR" id="Q12LE2"/>
<dbReference type="STRING" id="318161.Sden_2454"/>
<dbReference type="KEGG" id="sdn:Sden_2454"/>
<dbReference type="eggNOG" id="COG0133">
    <property type="taxonomic scope" value="Bacteria"/>
</dbReference>
<dbReference type="HOGENOM" id="CLU_016734_3_1_6"/>
<dbReference type="OrthoDB" id="9766131at2"/>
<dbReference type="UniPathway" id="UPA00035">
    <property type="reaction ID" value="UER00044"/>
</dbReference>
<dbReference type="Proteomes" id="UP000001982">
    <property type="component" value="Chromosome"/>
</dbReference>
<dbReference type="GO" id="GO:0005737">
    <property type="term" value="C:cytoplasm"/>
    <property type="evidence" value="ECO:0007669"/>
    <property type="project" value="TreeGrafter"/>
</dbReference>
<dbReference type="GO" id="GO:0004834">
    <property type="term" value="F:tryptophan synthase activity"/>
    <property type="evidence" value="ECO:0007669"/>
    <property type="project" value="UniProtKB-UniRule"/>
</dbReference>
<dbReference type="CDD" id="cd06446">
    <property type="entry name" value="Trp-synth_B"/>
    <property type="match status" value="1"/>
</dbReference>
<dbReference type="FunFam" id="3.40.50.1100:FF:000001">
    <property type="entry name" value="Tryptophan synthase beta chain"/>
    <property type="match status" value="1"/>
</dbReference>
<dbReference type="FunFam" id="3.40.50.1100:FF:000004">
    <property type="entry name" value="Tryptophan synthase beta chain"/>
    <property type="match status" value="1"/>
</dbReference>
<dbReference type="Gene3D" id="3.40.50.1100">
    <property type="match status" value="2"/>
</dbReference>
<dbReference type="HAMAP" id="MF_00133">
    <property type="entry name" value="Trp_synth_beta"/>
    <property type="match status" value="1"/>
</dbReference>
<dbReference type="InterPro" id="IPR006653">
    <property type="entry name" value="Trp_synth_b_CS"/>
</dbReference>
<dbReference type="InterPro" id="IPR006654">
    <property type="entry name" value="Trp_synth_beta"/>
</dbReference>
<dbReference type="InterPro" id="IPR023026">
    <property type="entry name" value="Trp_synth_beta/beta-like"/>
</dbReference>
<dbReference type="InterPro" id="IPR001926">
    <property type="entry name" value="TrpB-like_PALP"/>
</dbReference>
<dbReference type="InterPro" id="IPR036052">
    <property type="entry name" value="TrpB-like_PALP_sf"/>
</dbReference>
<dbReference type="NCBIfam" id="TIGR00263">
    <property type="entry name" value="trpB"/>
    <property type="match status" value="1"/>
</dbReference>
<dbReference type="PANTHER" id="PTHR48077:SF3">
    <property type="entry name" value="TRYPTOPHAN SYNTHASE"/>
    <property type="match status" value="1"/>
</dbReference>
<dbReference type="PANTHER" id="PTHR48077">
    <property type="entry name" value="TRYPTOPHAN SYNTHASE-RELATED"/>
    <property type="match status" value="1"/>
</dbReference>
<dbReference type="Pfam" id="PF00291">
    <property type="entry name" value="PALP"/>
    <property type="match status" value="1"/>
</dbReference>
<dbReference type="PIRSF" id="PIRSF001413">
    <property type="entry name" value="Trp_syn_beta"/>
    <property type="match status" value="1"/>
</dbReference>
<dbReference type="SUPFAM" id="SSF53686">
    <property type="entry name" value="Tryptophan synthase beta subunit-like PLP-dependent enzymes"/>
    <property type="match status" value="1"/>
</dbReference>
<dbReference type="PROSITE" id="PS00168">
    <property type="entry name" value="TRP_SYNTHASE_BETA"/>
    <property type="match status" value="1"/>
</dbReference>
<organism>
    <name type="scientific">Shewanella denitrificans (strain OS217 / ATCC BAA-1090 / DSM 15013)</name>
    <dbReference type="NCBI Taxonomy" id="318161"/>
    <lineage>
        <taxon>Bacteria</taxon>
        <taxon>Pseudomonadati</taxon>
        <taxon>Pseudomonadota</taxon>
        <taxon>Gammaproteobacteria</taxon>
        <taxon>Alteromonadales</taxon>
        <taxon>Shewanellaceae</taxon>
        <taxon>Shewanella</taxon>
    </lineage>
</organism>
<sequence>MTELKLDPYFGEYGGMYVPQILVPALKQLESAFVDAQQDPAFQAEFTDLLKNYAGRPTALTLTRNLSPNPLVKIYLKREDLLHGGAHKTNQVLGQALLAKRMGKKEIIAETGAGQHGVATALACALLGLKCKVYMGAKDVERQSPNVFRMKLMGAEVIPVTSGSATLKDACNEAMRDWSASYDKAHYLLGTAAGPHPFPTIVREFQRMIGEETKQQILEKEGRLPDAVIACVGGGSNAIGMFADFIDEPSVELIGVEPAGKGIDTPMHGAPLKHGKTGIFFGMKAPLMQDRDGQIEESYSVSAGLDFPSVGPQHAHLNAIGRARYESATDDEALAMFQQLARCEGIIPALESAHALAYAVKLAKTATKETILVVNLSGRGDKDIFTVSDILAAKEQESGND</sequence>
<keyword id="KW-0028">Amino-acid biosynthesis</keyword>
<keyword id="KW-0057">Aromatic amino acid biosynthesis</keyword>
<keyword id="KW-0456">Lyase</keyword>
<keyword id="KW-0663">Pyridoxal phosphate</keyword>
<keyword id="KW-1185">Reference proteome</keyword>
<keyword id="KW-0822">Tryptophan biosynthesis</keyword>
<protein>
    <recommendedName>
        <fullName evidence="1">Tryptophan synthase beta chain</fullName>
        <ecNumber evidence="1">4.2.1.20</ecNumber>
    </recommendedName>
</protein>
<gene>
    <name evidence="1" type="primary">trpB</name>
    <name type="ordered locus">Sden_2454</name>
</gene>